<proteinExistence type="inferred from homology"/>
<accession>Q3K5A6</accession>
<reference key="1">
    <citation type="journal article" date="2009" name="Genome Biol.">
        <title>Genomic and genetic analyses of diversity and plant interactions of Pseudomonas fluorescens.</title>
        <authorList>
            <person name="Silby M.W."/>
            <person name="Cerdeno-Tarraga A.M."/>
            <person name="Vernikos G.S."/>
            <person name="Giddens S.R."/>
            <person name="Jackson R.W."/>
            <person name="Preston G.M."/>
            <person name="Zhang X.-X."/>
            <person name="Moon C.D."/>
            <person name="Gehrig S.M."/>
            <person name="Godfrey S.A.C."/>
            <person name="Knight C.G."/>
            <person name="Malone J.G."/>
            <person name="Robinson Z."/>
            <person name="Spiers A.J."/>
            <person name="Harris S."/>
            <person name="Challis G.L."/>
            <person name="Yaxley A.M."/>
            <person name="Harris D."/>
            <person name="Seeger K."/>
            <person name="Murphy L."/>
            <person name="Rutter S."/>
            <person name="Squares R."/>
            <person name="Quail M.A."/>
            <person name="Saunders E."/>
            <person name="Mavromatis K."/>
            <person name="Brettin T.S."/>
            <person name="Bentley S.D."/>
            <person name="Hothersall J."/>
            <person name="Stephens E."/>
            <person name="Thomas C.M."/>
            <person name="Parkhill J."/>
            <person name="Levy S.B."/>
            <person name="Rainey P.B."/>
            <person name="Thomson N.R."/>
        </authorList>
    </citation>
    <scope>NUCLEOTIDE SEQUENCE [LARGE SCALE GENOMIC DNA]</scope>
    <source>
        <strain>Pf0-1</strain>
    </source>
</reference>
<comment type="similarity">
    <text evidence="1">Belongs to the UPF0301 (AlgH) family.</text>
</comment>
<dbReference type="EMBL" id="CP000094">
    <property type="protein sequence ID" value="ABA77048.1"/>
    <property type="molecule type" value="Genomic_DNA"/>
</dbReference>
<dbReference type="RefSeq" id="WP_011336368.1">
    <property type="nucleotide sequence ID" value="NC_007492.2"/>
</dbReference>
<dbReference type="SMR" id="Q3K5A6"/>
<dbReference type="KEGG" id="pfo:Pfl01_5311"/>
<dbReference type="eggNOG" id="COG1678">
    <property type="taxonomic scope" value="Bacteria"/>
</dbReference>
<dbReference type="HOGENOM" id="CLU_057596_1_0_6"/>
<dbReference type="Proteomes" id="UP000002704">
    <property type="component" value="Chromosome"/>
</dbReference>
<dbReference type="GO" id="GO:0005829">
    <property type="term" value="C:cytosol"/>
    <property type="evidence" value="ECO:0007669"/>
    <property type="project" value="TreeGrafter"/>
</dbReference>
<dbReference type="Gene3D" id="3.40.1740.10">
    <property type="entry name" value="VC0467-like"/>
    <property type="match status" value="1"/>
</dbReference>
<dbReference type="HAMAP" id="MF_00758">
    <property type="entry name" value="UPF0301"/>
    <property type="match status" value="1"/>
</dbReference>
<dbReference type="InterPro" id="IPR003774">
    <property type="entry name" value="AlgH-like"/>
</dbReference>
<dbReference type="NCBIfam" id="NF001266">
    <property type="entry name" value="PRK00228.1-1"/>
    <property type="match status" value="1"/>
</dbReference>
<dbReference type="PANTHER" id="PTHR30327">
    <property type="entry name" value="UNCHARACTERIZED PROTEIN YQGE"/>
    <property type="match status" value="1"/>
</dbReference>
<dbReference type="PANTHER" id="PTHR30327:SF1">
    <property type="entry name" value="UPF0301 PROTEIN YQGE"/>
    <property type="match status" value="1"/>
</dbReference>
<dbReference type="Pfam" id="PF02622">
    <property type="entry name" value="DUF179"/>
    <property type="match status" value="1"/>
</dbReference>
<dbReference type="SUPFAM" id="SSF143456">
    <property type="entry name" value="VC0467-like"/>
    <property type="match status" value="1"/>
</dbReference>
<feature type="chain" id="PRO_0000258857" description="UPF0301 protein Pfl01_5311">
    <location>
        <begin position="1"/>
        <end position="190"/>
    </location>
</feature>
<sequence>MKNVSPSYLKHHFLIAMPHMADPNFAHTLTYIVEHTANGAMGLVVNRPQELNLADILEQLRPDIDPPALCQHVPIFIGGPVQTDRGFVLHPAGKTFQATVELEGDLALSTSQDVLFAIADGVGPAKSVITLGYAGWEAGQLEAELADNAWLTCPYDADILFNTSSELRLEAAARHLGINLSLLTSQAGHA</sequence>
<evidence type="ECO:0000255" key="1">
    <source>
        <dbReference type="HAMAP-Rule" id="MF_00758"/>
    </source>
</evidence>
<organism>
    <name type="scientific">Pseudomonas fluorescens (strain Pf0-1)</name>
    <dbReference type="NCBI Taxonomy" id="205922"/>
    <lineage>
        <taxon>Bacteria</taxon>
        <taxon>Pseudomonadati</taxon>
        <taxon>Pseudomonadota</taxon>
        <taxon>Gammaproteobacteria</taxon>
        <taxon>Pseudomonadales</taxon>
        <taxon>Pseudomonadaceae</taxon>
        <taxon>Pseudomonas</taxon>
    </lineage>
</organism>
<protein>
    <recommendedName>
        <fullName evidence="1">UPF0301 protein Pfl01_5311</fullName>
    </recommendedName>
</protein>
<name>Y5311_PSEPF</name>
<gene>
    <name type="ordered locus">Pfl01_5311</name>
</gene>